<gene>
    <name evidence="1" type="primary">ndhI</name>
</gene>
<accession>Q8HVL6</accession>
<evidence type="ECO:0000255" key="1">
    <source>
        <dbReference type="HAMAP-Rule" id="MF_01351"/>
    </source>
</evidence>
<proteinExistence type="inferred from homology"/>
<organism>
    <name type="scientific">Rudbeckia hirta</name>
    <name type="common">Black-eyed Susan</name>
    <dbReference type="NCBI Taxonomy" id="52299"/>
    <lineage>
        <taxon>Eukaryota</taxon>
        <taxon>Viridiplantae</taxon>
        <taxon>Streptophyta</taxon>
        <taxon>Embryophyta</taxon>
        <taxon>Tracheophyta</taxon>
        <taxon>Spermatophyta</taxon>
        <taxon>Magnoliopsida</taxon>
        <taxon>eudicotyledons</taxon>
        <taxon>Gunneridae</taxon>
        <taxon>Pentapetalae</taxon>
        <taxon>asterids</taxon>
        <taxon>campanulids</taxon>
        <taxon>Asterales</taxon>
        <taxon>Asteraceae</taxon>
        <taxon>Asteroideae</taxon>
        <taxon>Heliantheae alliance</taxon>
        <taxon>Heliantheae</taxon>
        <taxon>Rudbeckia</taxon>
    </lineage>
</organism>
<geneLocation type="chloroplast"/>
<sequence>MFPMVTEFMNYGQQTVRAARYIGQGFMITLSHANRLPVTIQYPYEKLITSERFRGRIHFEFDKCIACEVCVRVCPIDLPVVDWKLETDIRKKRLLNYSIDFGICIFCGNCVEYCPTNCLSMTEEYELSTYDRHELNYNQIALGRLPMSIIDDYTIRTILNLPEIKT</sequence>
<protein>
    <recommendedName>
        <fullName evidence="1">NAD(P)H-quinone oxidoreductase subunit I, chloroplastic</fullName>
        <ecNumber evidence="1">7.1.1.-</ecNumber>
    </recommendedName>
    <alternativeName>
        <fullName evidence="1">NAD(P)H dehydrogenase subunit I</fullName>
        <shortName evidence="1">NDH subunit I</shortName>
    </alternativeName>
    <alternativeName>
        <fullName evidence="1">NADH-plastoquinone oxidoreductase subunit I</fullName>
    </alternativeName>
</protein>
<dbReference type="EC" id="7.1.1.-" evidence="1"/>
<dbReference type="EMBL" id="AF383847">
    <property type="protein sequence ID" value="AAN61788.1"/>
    <property type="molecule type" value="Genomic_DNA"/>
</dbReference>
<dbReference type="RefSeq" id="YP_010931472.1">
    <property type="nucleotide sequence ID" value="NC_082052.1"/>
</dbReference>
<dbReference type="SMR" id="Q8HVL6"/>
<dbReference type="GeneID" id="84347305"/>
<dbReference type="GO" id="GO:0009535">
    <property type="term" value="C:chloroplast thylakoid membrane"/>
    <property type="evidence" value="ECO:0007669"/>
    <property type="project" value="UniProtKB-SubCell"/>
</dbReference>
<dbReference type="GO" id="GO:0051539">
    <property type="term" value="F:4 iron, 4 sulfur cluster binding"/>
    <property type="evidence" value="ECO:0007669"/>
    <property type="project" value="UniProtKB-KW"/>
</dbReference>
<dbReference type="GO" id="GO:0005506">
    <property type="term" value="F:iron ion binding"/>
    <property type="evidence" value="ECO:0007669"/>
    <property type="project" value="UniProtKB-UniRule"/>
</dbReference>
<dbReference type="GO" id="GO:0008137">
    <property type="term" value="F:NADH dehydrogenase (ubiquinone) activity"/>
    <property type="evidence" value="ECO:0007669"/>
    <property type="project" value="InterPro"/>
</dbReference>
<dbReference type="GO" id="GO:0048038">
    <property type="term" value="F:quinone binding"/>
    <property type="evidence" value="ECO:0007669"/>
    <property type="project" value="UniProtKB-KW"/>
</dbReference>
<dbReference type="GO" id="GO:0019684">
    <property type="term" value="P:photosynthesis, light reaction"/>
    <property type="evidence" value="ECO:0007669"/>
    <property type="project" value="UniProtKB-UniRule"/>
</dbReference>
<dbReference type="FunFam" id="3.30.70.3270:FF:000006">
    <property type="entry name" value="NAD(P)H-quinone oxidoreductase subunit I, chloroplastic"/>
    <property type="match status" value="1"/>
</dbReference>
<dbReference type="Gene3D" id="3.30.70.3270">
    <property type="match status" value="1"/>
</dbReference>
<dbReference type="HAMAP" id="MF_01351">
    <property type="entry name" value="NDH1_NuoI"/>
    <property type="match status" value="1"/>
</dbReference>
<dbReference type="InterPro" id="IPR017896">
    <property type="entry name" value="4Fe4S_Fe-S-bd"/>
</dbReference>
<dbReference type="InterPro" id="IPR017900">
    <property type="entry name" value="4Fe4S_Fe_S_CS"/>
</dbReference>
<dbReference type="InterPro" id="IPR010226">
    <property type="entry name" value="NADH_quinone_OxRdtase_chainI"/>
</dbReference>
<dbReference type="InterPro" id="IPR004497">
    <property type="entry name" value="NDHI"/>
</dbReference>
<dbReference type="NCBIfam" id="TIGR00403">
    <property type="entry name" value="ndhI"/>
    <property type="match status" value="1"/>
</dbReference>
<dbReference type="NCBIfam" id="TIGR01971">
    <property type="entry name" value="NuoI"/>
    <property type="match status" value="1"/>
</dbReference>
<dbReference type="NCBIfam" id="NF004537">
    <property type="entry name" value="PRK05888.1-3"/>
    <property type="match status" value="1"/>
</dbReference>
<dbReference type="PANTHER" id="PTHR47275">
    <property type="entry name" value="NAD(P)H-QUINONE OXIDOREDUCTASE SUBUNIT I, CHLOROPLASTIC"/>
    <property type="match status" value="1"/>
</dbReference>
<dbReference type="PANTHER" id="PTHR47275:SF1">
    <property type="entry name" value="NAD(P)H-QUINONE OXIDOREDUCTASE SUBUNIT I, CHLOROPLASTIC"/>
    <property type="match status" value="1"/>
</dbReference>
<dbReference type="Pfam" id="PF00037">
    <property type="entry name" value="Fer4"/>
    <property type="match status" value="2"/>
</dbReference>
<dbReference type="SUPFAM" id="SSF54862">
    <property type="entry name" value="4Fe-4S ferredoxins"/>
    <property type="match status" value="1"/>
</dbReference>
<dbReference type="PROSITE" id="PS00198">
    <property type="entry name" value="4FE4S_FER_1"/>
    <property type="match status" value="2"/>
</dbReference>
<dbReference type="PROSITE" id="PS51379">
    <property type="entry name" value="4FE4S_FER_2"/>
    <property type="match status" value="2"/>
</dbReference>
<reference key="1">
    <citation type="submission" date="2003-01" db="EMBL/GenBank/DDBJ databases">
        <title>Chloroplast DNA phylogeny of tribe Heliantheae (Asteraceae).</title>
        <authorList>
            <person name="Panero J.L."/>
            <person name="Baldwin B.G."/>
            <person name="Schilling E.E."/>
            <person name="Clevinger J.A."/>
        </authorList>
    </citation>
    <scope>NUCLEOTIDE SEQUENCE [GENOMIC DNA]</scope>
</reference>
<keyword id="KW-0004">4Fe-4S</keyword>
<keyword id="KW-0150">Chloroplast</keyword>
<keyword id="KW-0408">Iron</keyword>
<keyword id="KW-0411">Iron-sulfur</keyword>
<keyword id="KW-0472">Membrane</keyword>
<keyword id="KW-0479">Metal-binding</keyword>
<keyword id="KW-0520">NAD</keyword>
<keyword id="KW-0521">NADP</keyword>
<keyword id="KW-0934">Plastid</keyword>
<keyword id="KW-0618">Plastoquinone</keyword>
<keyword id="KW-0874">Quinone</keyword>
<keyword id="KW-0677">Repeat</keyword>
<keyword id="KW-0793">Thylakoid</keyword>
<keyword id="KW-1278">Translocase</keyword>
<feature type="chain" id="PRO_0000250846" description="NAD(P)H-quinone oxidoreductase subunit I, chloroplastic">
    <location>
        <begin position="1"/>
        <end position="166"/>
    </location>
</feature>
<feature type="domain" description="4Fe-4S ferredoxin-type 1" evidence="1">
    <location>
        <begin position="55"/>
        <end position="84"/>
    </location>
</feature>
<feature type="domain" description="4Fe-4S ferredoxin-type 2" evidence="1">
    <location>
        <begin position="95"/>
        <end position="124"/>
    </location>
</feature>
<feature type="binding site" evidence="1">
    <location>
        <position position="64"/>
    </location>
    <ligand>
        <name>[4Fe-4S] cluster</name>
        <dbReference type="ChEBI" id="CHEBI:49883"/>
        <label>1</label>
    </ligand>
</feature>
<feature type="binding site" evidence="1">
    <location>
        <position position="67"/>
    </location>
    <ligand>
        <name>[4Fe-4S] cluster</name>
        <dbReference type="ChEBI" id="CHEBI:49883"/>
        <label>1</label>
    </ligand>
</feature>
<feature type="binding site" evidence="1">
    <location>
        <position position="70"/>
    </location>
    <ligand>
        <name>[4Fe-4S] cluster</name>
        <dbReference type="ChEBI" id="CHEBI:49883"/>
        <label>1</label>
    </ligand>
</feature>
<feature type="binding site" evidence="1">
    <location>
        <position position="74"/>
    </location>
    <ligand>
        <name>[4Fe-4S] cluster</name>
        <dbReference type="ChEBI" id="CHEBI:49883"/>
        <label>2</label>
    </ligand>
</feature>
<feature type="binding site" evidence="1">
    <location>
        <position position="104"/>
    </location>
    <ligand>
        <name>[4Fe-4S] cluster</name>
        <dbReference type="ChEBI" id="CHEBI:49883"/>
        <label>2</label>
    </ligand>
</feature>
<feature type="binding site" evidence="1">
    <location>
        <position position="107"/>
    </location>
    <ligand>
        <name>[4Fe-4S] cluster</name>
        <dbReference type="ChEBI" id="CHEBI:49883"/>
        <label>2</label>
    </ligand>
</feature>
<feature type="binding site" evidence="1">
    <location>
        <position position="110"/>
    </location>
    <ligand>
        <name>[4Fe-4S] cluster</name>
        <dbReference type="ChEBI" id="CHEBI:49883"/>
        <label>2</label>
    </ligand>
</feature>
<feature type="binding site" evidence="1">
    <location>
        <position position="114"/>
    </location>
    <ligand>
        <name>[4Fe-4S] cluster</name>
        <dbReference type="ChEBI" id="CHEBI:49883"/>
        <label>1</label>
    </ligand>
</feature>
<comment type="function">
    <text evidence="1">NDH shuttles electrons from NAD(P)H:plastoquinone, via FMN and iron-sulfur (Fe-S) centers, to quinones in the photosynthetic chain and possibly in a chloroplast respiratory chain. The immediate electron acceptor for the enzyme in this species is believed to be plastoquinone. Couples the redox reaction to proton translocation, and thus conserves the redox energy in a proton gradient.</text>
</comment>
<comment type="catalytic activity">
    <reaction evidence="1">
        <text>a plastoquinone + NADH + (n+1) H(+)(in) = a plastoquinol + NAD(+) + n H(+)(out)</text>
        <dbReference type="Rhea" id="RHEA:42608"/>
        <dbReference type="Rhea" id="RHEA-COMP:9561"/>
        <dbReference type="Rhea" id="RHEA-COMP:9562"/>
        <dbReference type="ChEBI" id="CHEBI:15378"/>
        <dbReference type="ChEBI" id="CHEBI:17757"/>
        <dbReference type="ChEBI" id="CHEBI:57540"/>
        <dbReference type="ChEBI" id="CHEBI:57945"/>
        <dbReference type="ChEBI" id="CHEBI:62192"/>
    </reaction>
</comment>
<comment type="catalytic activity">
    <reaction evidence="1">
        <text>a plastoquinone + NADPH + (n+1) H(+)(in) = a plastoquinol + NADP(+) + n H(+)(out)</text>
        <dbReference type="Rhea" id="RHEA:42612"/>
        <dbReference type="Rhea" id="RHEA-COMP:9561"/>
        <dbReference type="Rhea" id="RHEA-COMP:9562"/>
        <dbReference type="ChEBI" id="CHEBI:15378"/>
        <dbReference type="ChEBI" id="CHEBI:17757"/>
        <dbReference type="ChEBI" id="CHEBI:57783"/>
        <dbReference type="ChEBI" id="CHEBI:58349"/>
        <dbReference type="ChEBI" id="CHEBI:62192"/>
    </reaction>
</comment>
<comment type="cofactor">
    <cofactor evidence="1">
        <name>[4Fe-4S] cluster</name>
        <dbReference type="ChEBI" id="CHEBI:49883"/>
    </cofactor>
    <text evidence="1">Binds 2 [4Fe-4S] clusters per subunit.</text>
</comment>
<comment type="subunit">
    <text evidence="1">NDH is composed of at least 16 different subunits, 5 of which are encoded in the nucleus.</text>
</comment>
<comment type="subcellular location">
    <subcellularLocation>
        <location evidence="1">Plastid</location>
        <location evidence="1">Chloroplast thylakoid membrane</location>
        <topology evidence="1">Peripheral membrane protein</topology>
    </subcellularLocation>
</comment>
<comment type="similarity">
    <text evidence="1">Belongs to the complex I 23 kDa subunit family.</text>
</comment>
<name>NDHI_RUDHI</name>